<organism>
    <name type="scientific">Homo sapiens</name>
    <name type="common">Human</name>
    <dbReference type="NCBI Taxonomy" id="9606"/>
    <lineage>
        <taxon>Eukaryota</taxon>
        <taxon>Metazoa</taxon>
        <taxon>Chordata</taxon>
        <taxon>Craniata</taxon>
        <taxon>Vertebrata</taxon>
        <taxon>Euteleostomi</taxon>
        <taxon>Mammalia</taxon>
        <taxon>Eutheria</taxon>
        <taxon>Euarchontoglires</taxon>
        <taxon>Primates</taxon>
        <taxon>Haplorrhini</taxon>
        <taxon>Catarrhini</taxon>
        <taxon>Hominidae</taxon>
        <taxon>Homo</taxon>
    </lineage>
</organism>
<proteinExistence type="evidence at protein level"/>
<name>RGS13_HUMAN</name>
<evidence type="ECO:0000250" key="1"/>
<evidence type="ECO:0000255" key="2">
    <source>
        <dbReference type="PROSITE-ProRule" id="PRU00171"/>
    </source>
</evidence>
<evidence type="ECO:0000269" key="3">
    <source ref="2"/>
</evidence>
<feature type="chain" id="PRO_0000204215" description="Regulator of G-protein signaling 13">
    <location>
        <begin position="1"/>
        <end position="159"/>
    </location>
</feature>
<feature type="domain" description="RGS" evidence="2">
    <location>
        <begin position="34"/>
        <end position="150"/>
    </location>
</feature>
<feature type="sequence variant" id="VAR_034453" description="In dbSNP:rs16834603." evidence="3">
    <original>L</original>
    <variation>F</variation>
    <location>
        <position position="150"/>
    </location>
</feature>
<gene>
    <name type="primary">RGS13</name>
</gene>
<protein>
    <recommendedName>
        <fullName>Regulator of G-protein signaling 13</fullName>
        <shortName>RGS13</shortName>
    </recommendedName>
</protein>
<dbReference type="EMBL" id="AF030107">
    <property type="protein sequence ID" value="AAB84000.1"/>
    <property type="molecule type" value="mRNA"/>
</dbReference>
<dbReference type="EMBL" id="AF493935">
    <property type="protein sequence ID" value="AAM12649.1"/>
    <property type="molecule type" value="mRNA"/>
</dbReference>
<dbReference type="EMBL" id="AY562947">
    <property type="protein sequence ID" value="AAS66360.1"/>
    <property type="molecule type" value="mRNA"/>
</dbReference>
<dbReference type="EMBL" id="BT006929">
    <property type="protein sequence ID" value="AAP35575.1"/>
    <property type="molecule type" value="mRNA"/>
</dbReference>
<dbReference type="EMBL" id="CR536532">
    <property type="protein sequence ID" value="CAG38769.1"/>
    <property type="molecule type" value="mRNA"/>
</dbReference>
<dbReference type="EMBL" id="AL136454">
    <property type="status" value="NOT_ANNOTATED_CDS"/>
    <property type="molecule type" value="Genomic_DNA"/>
</dbReference>
<dbReference type="EMBL" id="AL596119">
    <property type="status" value="NOT_ANNOTATED_CDS"/>
    <property type="molecule type" value="Genomic_DNA"/>
</dbReference>
<dbReference type="EMBL" id="BC016667">
    <property type="protein sequence ID" value="AAH16667.1"/>
    <property type="molecule type" value="mRNA"/>
</dbReference>
<dbReference type="EMBL" id="BC056866">
    <property type="protein sequence ID" value="AAH56866.2"/>
    <property type="molecule type" value="mRNA"/>
</dbReference>
<dbReference type="CCDS" id="CCDS1376.1"/>
<dbReference type="RefSeq" id="NP_002918.1">
    <property type="nucleotide sequence ID" value="NM_002927.5"/>
</dbReference>
<dbReference type="RefSeq" id="NP_658912.1">
    <property type="nucleotide sequence ID" value="NM_144766.3"/>
</dbReference>
<dbReference type="SMR" id="O14921"/>
<dbReference type="BioGRID" id="111935">
    <property type="interactions" value="28"/>
</dbReference>
<dbReference type="FunCoup" id="O14921">
    <property type="interactions" value="391"/>
</dbReference>
<dbReference type="IntAct" id="O14921">
    <property type="interactions" value="8"/>
</dbReference>
<dbReference type="MINT" id="O14921"/>
<dbReference type="STRING" id="9606.ENSP00000442837"/>
<dbReference type="iPTMnet" id="O14921"/>
<dbReference type="PhosphoSitePlus" id="O14921"/>
<dbReference type="BioMuta" id="RGS13"/>
<dbReference type="MassIVE" id="O14921"/>
<dbReference type="PaxDb" id="9606-ENSP00000442837"/>
<dbReference type="PeptideAtlas" id="O14921"/>
<dbReference type="ProteomicsDB" id="48301"/>
<dbReference type="Antibodypedia" id="20618">
    <property type="antibodies" value="241 antibodies from 31 providers"/>
</dbReference>
<dbReference type="DNASU" id="6003"/>
<dbReference type="Ensembl" id="ENST00000391995.7">
    <property type="protein sequence ID" value="ENSP00000375853.2"/>
    <property type="gene ID" value="ENSG00000127074.15"/>
</dbReference>
<dbReference type="Ensembl" id="ENST00000543215.5">
    <property type="protein sequence ID" value="ENSP00000442837.1"/>
    <property type="gene ID" value="ENSG00000127074.15"/>
</dbReference>
<dbReference type="GeneID" id="6003"/>
<dbReference type="KEGG" id="hsa:6003"/>
<dbReference type="MANE-Select" id="ENST00000391995.7">
    <property type="protein sequence ID" value="ENSP00000375853.2"/>
    <property type="RefSeq nucleotide sequence ID" value="NM_002927.5"/>
    <property type="RefSeq protein sequence ID" value="NP_002918.1"/>
</dbReference>
<dbReference type="UCSC" id="uc001gsj.4">
    <property type="organism name" value="human"/>
</dbReference>
<dbReference type="AGR" id="HGNC:9995"/>
<dbReference type="CTD" id="6003"/>
<dbReference type="DisGeNET" id="6003"/>
<dbReference type="GeneCards" id="RGS13"/>
<dbReference type="HGNC" id="HGNC:9995">
    <property type="gene designation" value="RGS13"/>
</dbReference>
<dbReference type="HPA" id="ENSG00000127074">
    <property type="expression patterns" value="Tissue enriched (lymphoid)"/>
</dbReference>
<dbReference type="MIM" id="607190">
    <property type="type" value="gene"/>
</dbReference>
<dbReference type="neXtProt" id="NX_O14921"/>
<dbReference type="OpenTargets" id="ENSG00000127074"/>
<dbReference type="PharmGKB" id="PA34365"/>
<dbReference type="VEuPathDB" id="HostDB:ENSG00000127074"/>
<dbReference type="eggNOG" id="KOG3589">
    <property type="taxonomic scope" value="Eukaryota"/>
</dbReference>
<dbReference type="GeneTree" id="ENSGT00940000158520"/>
<dbReference type="HOGENOM" id="CLU_059863_1_5_1"/>
<dbReference type="InParanoid" id="O14921"/>
<dbReference type="OMA" id="EYIQPQA"/>
<dbReference type="OrthoDB" id="196547at2759"/>
<dbReference type="PAN-GO" id="O14921">
    <property type="GO annotations" value="0 GO annotations based on evolutionary models"/>
</dbReference>
<dbReference type="PhylomeDB" id="O14921"/>
<dbReference type="TreeFam" id="TF315837"/>
<dbReference type="PathwayCommons" id="O14921"/>
<dbReference type="Reactome" id="R-HSA-416476">
    <property type="pathway name" value="G alpha (q) signalling events"/>
</dbReference>
<dbReference type="Reactome" id="R-HSA-418594">
    <property type="pathway name" value="G alpha (i) signalling events"/>
</dbReference>
<dbReference type="SignaLink" id="O14921"/>
<dbReference type="SIGNOR" id="O14921"/>
<dbReference type="BioGRID-ORCS" id="6003">
    <property type="hits" value="103 hits in 1111 CRISPR screens"/>
</dbReference>
<dbReference type="ChiTaRS" id="RGS13">
    <property type="organism name" value="human"/>
</dbReference>
<dbReference type="GeneWiki" id="RGS13"/>
<dbReference type="GenomeRNAi" id="6003"/>
<dbReference type="Pharos" id="O14921">
    <property type="development level" value="Tbio"/>
</dbReference>
<dbReference type="PRO" id="PR:O14921"/>
<dbReference type="Proteomes" id="UP000005640">
    <property type="component" value="Chromosome 1"/>
</dbReference>
<dbReference type="RNAct" id="O14921">
    <property type="molecule type" value="protein"/>
</dbReference>
<dbReference type="Bgee" id="ENSG00000127074">
    <property type="expression patterns" value="Expressed in vermiform appendix and 94 other cell types or tissues"/>
</dbReference>
<dbReference type="GO" id="GO:0005829">
    <property type="term" value="C:cytosol"/>
    <property type="evidence" value="ECO:0007669"/>
    <property type="project" value="Ensembl"/>
</dbReference>
<dbReference type="GO" id="GO:0005634">
    <property type="term" value="C:nucleus"/>
    <property type="evidence" value="ECO:0007669"/>
    <property type="project" value="Ensembl"/>
</dbReference>
<dbReference type="GO" id="GO:0005886">
    <property type="term" value="C:plasma membrane"/>
    <property type="evidence" value="ECO:0000304"/>
    <property type="project" value="Reactome"/>
</dbReference>
<dbReference type="GO" id="GO:0003924">
    <property type="term" value="F:GTPase activity"/>
    <property type="evidence" value="ECO:0000304"/>
    <property type="project" value="Reactome"/>
</dbReference>
<dbReference type="GO" id="GO:0007186">
    <property type="term" value="P:G protein-coupled receptor signaling pathway"/>
    <property type="evidence" value="ECO:0000304"/>
    <property type="project" value="Reactome"/>
</dbReference>
<dbReference type="GO" id="GO:0045744">
    <property type="term" value="P:negative regulation of G protein-coupled receptor signaling pathway"/>
    <property type="evidence" value="ECO:0007669"/>
    <property type="project" value="Ensembl"/>
</dbReference>
<dbReference type="CDD" id="cd08716">
    <property type="entry name" value="RGS_RGS13"/>
    <property type="match status" value="1"/>
</dbReference>
<dbReference type="FunFam" id="1.10.167.10:FF:000001">
    <property type="entry name" value="Putative regulator of g-protein signaling 12"/>
    <property type="match status" value="1"/>
</dbReference>
<dbReference type="FunFam" id="1.10.196.10:FF:000013">
    <property type="entry name" value="Regulator of G-protein signaling 13"/>
    <property type="match status" value="1"/>
</dbReference>
<dbReference type="Gene3D" id="1.10.196.10">
    <property type="match status" value="2"/>
</dbReference>
<dbReference type="Gene3D" id="1.10.167.10">
    <property type="entry name" value="Regulator of G-protein Signalling 4, domain 2"/>
    <property type="match status" value="1"/>
</dbReference>
<dbReference type="InterPro" id="IPR016137">
    <property type="entry name" value="RGS"/>
</dbReference>
<dbReference type="InterPro" id="IPR036305">
    <property type="entry name" value="RGS_sf"/>
</dbReference>
<dbReference type="InterPro" id="IPR024066">
    <property type="entry name" value="RGS_subdom1/3"/>
</dbReference>
<dbReference type="InterPro" id="IPR044926">
    <property type="entry name" value="RGS_subdomain_2"/>
</dbReference>
<dbReference type="PANTHER" id="PTHR10845">
    <property type="entry name" value="REGULATOR OF G PROTEIN SIGNALING"/>
    <property type="match status" value="1"/>
</dbReference>
<dbReference type="PANTHER" id="PTHR10845:SF32">
    <property type="entry name" value="REGULATOR OF G-PROTEIN SIGNALING 13"/>
    <property type="match status" value="1"/>
</dbReference>
<dbReference type="Pfam" id="PF00615">
    <property type="entry name" value="RGS"/>
    <property type="match status" value="1"/>
</dbReference>
<dbReference type="PRINTS" id="PR01301">
    <property type="entry name" value="RGSPROTEIN"/>
</dbReference>
<dbReference type="SMART" id="SM00315">
    <property type="entry name" value="RGS"/>
    <property type="match status" value="1"/>
</dbReference>
<dbReference type="SUPFAM" id="SSF48097">
    <property type="entry name" value="Regulator of G-protein signaling, RGS"/>
    <property type="match status" value="1"/>
</dbReference>
<dbReference type="PROSITE" id="PS50132">
    <property type="entry name" value="RGS"/>
    <property type="match status" value="1"/>
</dbReference>
<comment type="function">
    <text evidence="1">Inhibits signal transduction by increasing the GTPase activity of G protein alpha subunits thereby driving them into their inactive GDP-bound form. Binds to both G(i)-alpha and G(q)-alpha (By similarity).</text>
</comment>
<comment type="interaction">
    <interactant intactId="EBI-17843660">
        <id>O14921</id>
    </interactant>
    <interactant intactId="EBI-11574440">
        <id>Q9BWW8</id>
        <label>APOL6</label>
    </interactant>
    <organismsDiffer>false</organismsDiffer>
    <experiments>3</experiments>
</comment>
<accession>O14921</accession>
<accession>Q6PGR2</accession>
<accession>Q8TD63</accession>
<accession>Q9BX45</accession>
<keyword id="KW-1267">Proteomics identification</keyword>
<keyword id="KW-1185">Reference proteome</keyword>
<keyword id="KW-0734">Signal transduction inhibitor</keyword>
<sequence length="159" mass="19135">MSRRNCWICKMCRDESKRPPSNLTLEEVLQWAQSFENLMATKYGPVVYAAYLKMEHSDENIQFWMACETYKKIASRWSRISRAKKLYKIYIQPQSPREINIDSSTRETIIRNIQEPTETCFEEAQKIVYMHMERDSYPRFLKSEMYQKLLKTMQSNNSF</sequence>
<reference key="1">
    <citation type="submission" date="1997-10" db="EMBL/GenBank/DDBJ databases">
        <title>Molecular cloning of human RGS13 cDNA.</title>
        <authorList>
            <person name="Chatterjee T.K."/>
            <person name="Fisher R.A."/>
        </authorList>
    </citation>
    <scope>NUCLEOTIDE SEQUENCE [MRNA]</scope>
    <source>
        <tissue>Lung</tissue>
    </source>
</reference>
<reference key="2">
    <citation type="submission" date="2004-03" db="EMBL/GenBank/DDBJ databases">
        <title>cDNA clones of human proteins involved in signal transduction sequenced by the Guthrie cDNA resource center (www.cdna.org).</title>
        <authorList>
            <person name="Puhl H.L. III"/>
            <person name="Ikeda S.R."/>
            <person name="Aronstam R.S."/>
        </authorList>
    </citation>
    <scope>NUCLEOTIDE SEQUENCE [LARGE SCALE MRNA]</scope>
    <scope>VARIANT PHE-150</scope>
    <source>
        <tissue>Brain</tissue>
    </source>
</reference>
<reference key="3">
    <citation type="submission" date="2003-05" db="EMBL/GenBank/DDBJ databases">
        <title>Cloning of human full-length CDSs in BD Creator(TM) system donor vector.</title>
        <authorList>
            <person name="Kalnine N."/>
            <person name="Chen X."/>
            <person name="Rolfs A."/>
            <person name="Halleck A."/>
            <person name="Hines L."/>
            <person name="Eisenstein S."/>
            <person name="Koundinya M."/>
            <person name="Raphael J."/>
            <person name="Moreira D."/>
            <person name="Kelley T."/>
            <person name="LaBaer J."/>
            <person name="Lin Y."/>
            <person name="Phelan M."/>
            <person name="Farmer A."/>
        </authorList>
    </citation>
    <scope>NUCLEOTIDE SEQUENCE [LARGE SCALE MRNA]</scope>
</reference>
<reference key="4">
    <citation type="submission" date="2004-06" db="EMBL/GenBank/DDBJ databases">
        <title>Cloning of human full open reading frames in Gateway(TM) system entry vector (pDONR201).</title>
        <authorList>
            <person name="Halleck A."/>
            <person name="Ebert L."/>
            <person name="Mkoundinya M."/>
            <person name="Schick M."/>
            <person name="Eisenstein S."/>
            <person name="Neubert P."/>
            <person name="Kstrang K."/>
            <person name="Schatten R."/>
            <person name="Shen B."/>
            <person name="Henze S."/>
            <person name="Mar W."/>
            <person name="Korn B."/>
            <person name="Zuo D."/>
            <person name="Hu Y."/>
            <person name="LaBaer J."/>
        </authorList>
    </citation>
    <scope>NUCLEOTIDE SEQUENCE [LARGE SCALE MRNA]</scope>
</reference>
<reference key="5">
    <citation type="journal article" date="2006" name="Nature">
        <title>The DNA sequence and biological annotation of human chromosome 1.</title>
        <authorList>
            <person name="Gregory S.G."/>
            <person name="Barlow K.F."/>
            <person name="McLay K.E."/>
            <person name="Kaul R."/>
            <person name="Swarbreck D."/>
            <person name="Dunham A."/>
            <person name="Scott C.E."/>
            <person name="Howe K.L."/>
            <person name="Woodfine K."/>
            <person name="Spencer C.C.A."/>
            <person name="Jones M.C."/>
            <person name="Gillson C."/>
            <person name="Searle S."/>
            <person name="Zhou Y."/>
            <person name="Kokocinski F."/>
            <person name="McDonald L."/>
            <person name="Evans R."/>
            <person name="Phillips K."/>
            <person name="Atkinson A."/>
            <person name="Cooper R."/>
            <person name="Jones C."/>
            <person name="Hall R.E."/>
            <person name="Andrews T.D."/>
            <person name="Lloyd C."/>
            <person name="Ainscough R."/>
            <person name="Almeida J.P."/>
            <person name="Ambrose K.D."/>
            <person name="Anderson F."/>
            <person name="Andrew R.W."/>
            <person name="Ashwell R.I.S."/>
            <person name="Aubin K."/>
            <person name="Babbage A.K."/>
            <person name="Bagguley C.L."/>
            <person name="Bailey J."/>
            <person name="Beasley H."/>
            <person name="Bethel G."/>
            <person name="Bird C.P."/>
            <person name="Bray-Allen S."/>
            <person name="Brown J.Y."/>
            <person name="Brown A.J."/>
            <person name="Buckley D."/>
            <person name="Burton J."/>
            <person name="Bye J."/>
            <person name="Carder C."/>
            <person name="Chapman J.C."/>
            <person name="Clark S.Y."/>
            <person name="Clarke G."/>
            <person name="Clee C."/>
            <person name="Cobley V."/>
            <person name="Collier R.E."/>
            <person name="Corby N."/>
            <person name="Coville G.J."/>
            <person name="Davies J."/>
            <person name="Deadman R."/>
            <person name="Dunn M."/>
            <person name="Earthrowl M."/>
            <person name="Ellington A.G."/>
            <person name="Errington H."/>
            <person name="Frankish A."/>
            <person name="Frankland J."/>
            <person name="French L."/>
            <person name="Garner P."/>
            <person name="Garnett J."/>
            <person name="Gay L."/>
            <person name="Ghori M.R.J."/>
            <person name="Gibson R."/>
            <person name="Gilby L.M."/>
            <person name="Gillett W."/>
            <person name="Glithero R.J."/>
            <person name="Grafham D.V."/>
            <person name="Griffiths C."/>
            <person name="Griffiths-Jones S."/>
            <person name="Grocock R."/>
            <person name="Hammond S."/>
            <person name="Harrison E.S.I."/>
            <person name="Hart E."/>
            <person name="Haugen E."/>
            <person name="Heath P.D."/>
            <person name="Holmes S."/>
            <person name="Holt K."/>
            <person name="Howden P.J."/>
            <person name="Hunt A.R."/>
            <person name="Hunt S.E."/>
            <person name="Hunter G."/>
            <person name="Isherwood J."/>
            <person name="James R."/>
            <person name="Johnson C."/>
            <person name="Johnson D."/>
            <person name="Joy A."/>
            <person name="Kay M."/>
            <person name="Kershaw J.K."/>
            <person name="Kibukawa M."/>
            <person name="Kimberley A.M."/>
            <person name="King A."/>
            <person name="Knights A.J."/>
            <person name="Lad H."/>
            <person name="Laird G."/>
            <person name="Lawlor S."/>
            <person name="Leongamornlert D.A."/>
            <person name="Lloyd D.M."/>
            <person name="Loveland J."/>
            <person name="Lovell J."/>
            <person name="Lush M.J."/>
            <person name="Lyne R."/>
            <person name="Martin S."/>
            <person name="Mashreghi-Mohammadi M."/>
            <person name="Matthews L."/>
            <person name="Matthews N.S.W."/>
            <person name="McLaren S."/>
            <person name="Milne S."/>
            <person name="Mistry S."/>
            <person name="Moore M.J.F."/>
            <person name="Nickerson T."/>
            <person name="O'Dell C.N."/>
            <person name="Oliver K."/>
            <person name="Palmeiri A."/>
            <person name="Palmer S.A."/>
            <person name="Parker A."/>
            <person name="Patel D."/>
            <person name="Pearce A.V."/>
            <person name="Peck A.I."/>
            <person name="Pelan S."/>
            <person name="Phelps K."/>
            <person name="Phillimore B.J."/>
            <person name="Plumb R."/>
            <person name="Rajan J."/>
            <person name="Raymond C."/>
            <person name="Rouse G."/>
            <person name="Saenphimmachak C."/>
            <person name="Sehra H.K."/>
            <person name="Sheridan E."/>
            <person name="Shownkeen R."/>
            <person name="Sims S."/>
            <person name="Skuce C.D."/>
            <person name="Smith M."/>
            <person name="Steward C."/>
            <person name="Subramanian S."/>
            <person name="Sycamore N."/>
            <person name="Tracey A."/>
            <person name="Tromans A."/>
            <person name="Van Helmond Z."/>
            <person name="Wall M."/>
            <person name="Wallis J.M."/>
            <person name="White S."/>
            <person name="Whitehead S.L."/>
            <person name="Wilkinson J.E."/>
            <person name="Willey D.L."/>
            <person name="Williams H."/>
            <person name="Wilming L."/>
            <person name="Wray P.W."/>
            <person name="Wu Z."/>
            <person name="Coulson A."/>
            <person name="Vaudin M."/>
            <person name="Sulston J.E."/>
            <person name="Durbin R.M."/>
            <person name="Hubbard T."/>
            <person name="Wooster R."/>
            <person name="Dunham I."/>
            <person name="Carter N.P."/>
            <person name="McVean G."/>
            <person name="Ross M.T."/>
            <person name="Harrow J."/>
            <person name="Olson M.V."/>
            <person name="Beck S."/>
            <person name="Rogers J."/>
            <person name="Bentley D.R."/>
        </authorList>
    </citation>
    <scope>NUCLEOTIDE SEQUENCE [LARGE SCALE GENOMIC DNA]</scope>
</reference>
<reference key="6">
    <citation type="journal article" date="2004" name="Genome Res.">
        <title>The status, quality, and expansion of the NIH full-length cDNA project: the Mammalian Gene Collection (MGC).</title>
        <authorList>
            <consortium name="The MGC Project Team"/>
        </authorList>
    </citation>
    <scope>NUCLEOTIDE SEQUENCE [LARGE SCALE MRNA]</scope>
    <source>
        <tissue>Lymph</tissue>
    </source>
</reference>